<reference key="1">
    <citation type="submission" date="2004-10" db="EMBL/GenBank/DDBJ databases">
        <authorList>
            <person name="Franchini G."/>
        </authorList>
    </citation>
    <scope>NUCLEOTIDE SEQUENCE [GENOMIC DNA]</scope>
</reference>
<reference key="2">
    <citation type="journal article" date="1987" name="Nature">
        <title>Sequence of simian immunodeficiency virus and its relationship to the human immunodeficiency viruses.</title>
        <authorList>
            <person name="Franchini G."/>
            <person name="Gallo R.C."/>
            <person name="Guo H.-G."/>
            <person name="Gurgo C."/>
            <person name="Callatti E."/>
            <person name="Fargnoli K."/>
            <person name="Hall L."/>
            <person name="Wong-Staal F."/>
            <person name="Reitz M.S. Jr."/>
        </authorList>
    </citation>
    <scope>NUCLEOTIDE SEQUENCE [GENOMIC RNA]</scope>
</reference>
<organism>
    <name type="scientific">Simian immunodeficiency virus (isolate K6W)</name>
    <name type="common">SIV-mac</name>
    <name type="synonym">Simian immunodeficiency virus rhesus monkey</name>
    <dbReference type="NCBI Taxonomy" id="11735"/>
    <lineage>
        <taxon>Viruses</taxon>
        <taxon>Riboviria</taxon>
        <taxon>Pararnavirae</taxon>
        <taxon>Artverviricota</taxon>
        <taxon>Revtraviricetes</taxon>
        <taxon>Ortervirales</taxon>
        <taxon>Retroviridae</taxon>
        <taxon>Orthoretrovirinae</taxon>
        <taxon>Lentivirus</taxon>
        <taxon>Simian immunodeficiency virus</taxon>
    </lineage>
</organism>
<feature type="signal peptide" evidence="2">
    <location>
        <begin position="1"/>
        <end position="19"/>
    </location>
</feature>
<feature type="chain" id="PRO_0000239513" description="Envelope glycoprotein gp160">
    <location>
        <begin position="20"/>
        <end position="881"/>
    </location>
</feature>
<feature type="chain" id="PRO_0000038468" description="Surface protein gp120" evidence="1">
    <location>
        <begin position="20"/>
        <end position="527"/>
    </location>
</feature>
<feature type="chain" id="PRO_0000038469" description="Transmembrane protein gp41" evidence="1">
    <location>
        <begin position="528"/>
        <end position="881"/>
    </location>
</feature>
<feature type="topological domain" description="Extracellular" evidence="2">
    <location>
        <begin position="20"/>
        <end position="696"/>
    </location>
</feature>
<feature type="transmembrane region" description="Helical" evidence="2">
    <location>
        <begin position="697"/>
        <end position="717"/>
    </location>
</feature>
<feature type="topological domain" description="Cytoplasmic" evidence="2">
    <location>
        <begin position="718"/>
        <end position="881"/>
    </location>
</feature>
<feature type="region of interest" description="V1">
    <location>
        <begin position="113"/>
        <end position="169"/>
    </location>
</feature>
<feature type="region of interest" description="V2">
    <location>
        <begin position="170"/>
        <end position="213"/>
    </location>
</feature>
<feature type="region of interest" description="V3">
    <location>
        <begin position="313"/>
        <end position="345"/>
    </location>
</feature>
<feature type="region of interest" description="V4">
    <location>
        <begin position="404"/>
        <end position="434"/>
    </location>
</feature>
<feature type="region of interest" description="V5">
    <location>
        <begin position="477"/>
        <end position="484"/>
    </location>
</feature>
<feature type="region of interest" description="Fusion peptide" evidence="2">
    <location>
        <begin position="528"/>
        <end position="548"/>
    </location>
</feature>
<feature type="region of interest" description="Immunosuppression" evidence="1">
    <location>
        <begin position="591"/>
        <end position="607"/>
    </location>
</feature>
<feature type="region of interest" description="MPER; binding to GalCer" evidence="1">
    <location>
        <begin position="673"/>
        <end position="694"/>
    </location>
</feature>
<feature type="region of interest" description="Disordered" evidence="3">
    <location>
        <begin position="737"/>
        <end position="761"/>
    </location>
</feature>
<feature type="coiled-coil region" evidence="2">
    <location>
        <begin position="636"/>
        <end position="668"/>
    </location>
</feature>
<feature type="short sequence motif" description="YXXV motif; contains endocytosis signal" evidence="1">
    <location>
        <begin position="723"/>
        <end position="726"/>
    </location>
</feature>
<feature type="short sequence motif" description="Di-leucine internalization motif" evidence="1">
    <location>
        <begin position="880"/>
        <end position="881"/>
    </location>
</feature>
<feature type="site" description="Cleavage; by host furin" evidence="2">
    <location>
        <begin position="527"/>
        <end position="528"/>
    </location>
</feature>
<feature type="site" description="In-frame UAG termination codon">
    <location>
        <position position="736"/>
    </location>
</feature>
<feature type="lipid moiety-binding region" description="S-palmitoyl cysteine; by host" evidence="1">
    <location>
        <position position="789"/>
    </location>
</feature>
<feature type="glycosylation site" description="N-linked (GlcNAc...) asparagine; by host" evidence="2">
    <location>
        <position position="37"/>
    </location>
</feature>
<feature type="glycosylation site" description="N-linked (GlcNAc...) asparagine; by host" evidence="2">
    <location>
        <position position="70"/>
    </location>
</feature>
<feature type="glycosylation site" description="N-linked (GlcNAc...) asparagine; by host" evidence="2">
    <location>
        <position position="114"/>
    </location>
</feature>
<feature type="glycosylation site" description="N-linked (GlcNAc...) asparagine; by host" evidence="2">
    <location>
        <position position="148"/>
    </location>
</feature>
<feature type="glycosylation site" description="N-linked (GlcNAc...) asparagine; by host" evidence="2">
    <location>
        <position position="158"/>
    </location>
</feature>
<feature type="glycosylation site" description="N-linked (GlcNAc...) asparagine; by host" evidence="2">
    <location>
        <position position="186"/>
    </location>
</feature>
<feature type="glycosylation site" description="N-linked (GlcNAc...) asparagine; by host" evidence="2">
    <location>
        <position position="200"/>
    </location>
</feature>
<feature type="glycosylation site" description="N-linked (GlcNAc...) asparagine; by host" evidence="2">
    <location>
        <position position="204"/>
    </location>
</feature>
<feature type="glycosylation site" description="N-linked (GlcNAc...) asparagine; by host" evidence="2">
    <location>
        <position position="214"/>
    </location>
</feature>
<feature type="glycosylation site" description="N-linked (GlcNAc...) asparagine; by host" evidence="2">
    <location>
        <position position="246"/>
    </location>
</feature>
<feature type="glycosylation site" description="N-linked (GlcNAc...) asparagine; by host" evidence="2">
    <location>
        <position position="249"/>
    </location>
</feature>
<feature type="glycosylation site" description="N-linked (GlcNAc...) asparagine; by host" evidence="2">
    <location>
        <position position="280"/>
    </location>
</feature>
<feature type="glycosylation site" description="N-linked (GlcNAc...) asparagine; by host" evidence="2">
    <location>
        <position position="286"/>
    </location>
</feature>
<feature type="glycosylation site" description="N-linked (GlcNAc...) asparagine; by host" evidence="2">
    <location>
        <position position="297"/>
    </location>
</feature>
<feature type="glycosylation site" description="N-linked (GlcNAc...) asparagine; by host" evidence="2">
    <location>
        <position position="308"/>
    </location>
</feature>
<feature type="glycosylation site" description="N-linked (GlcNAc...) asparagine; by host" evidence="2">
    <location>
        <position position="318"/>
    </location>
</feature>
<feature type="glycosylation site" description="N-linked (GlcNAc...) asparagine; by host" evidence="2">
    <location>
        <position position="373"/>
    </location>
</feature>
<feature type="glycosylation site" description="N-linked (GlcNAc...) asparagine; by host" evidence="2">
    <location>
        <position position="379"/>
    </location>
</feature>
<feature type="glycosylation site" description="N-linked (GlcNAc...) asparagine; by host" evidence="2">
    <location>
        <position position="462"/>
    </location>
</feature>
<feature type="glycosylation site" description="N-linked (GlcNAc...) asparagine; by host" evidence="2">
    <location>
        <position position="478"/>
    </location>
</feature>
<feature type="glycosylation site" description="N-linked (GlcNAc...) asparagine; by host" evidence="2">
    <location>
        <position position="627"/>
    </location>
</feature>
<feature type="glycosylation site" description="N-linked (GlcNAc...) asparagine; by host" evidence="2">
    <location>
        <position position="636"/>
    </location>
</feature>
<feature type="glycosylation site" description="N-linked (GlcNAc...) asparagine; by host" evidence="2">
    <location>
        <position position="652"/>
    </location>
</feature>
<feature type="disulfide bond" evidence="1">
    <location>
        <begin position="44"/>
        <end position="57"/>
    </location>
</feature>
<feature type="disulfide bond" evidence="1">
    <location>
        <begin position="101"/>
        <end position="222"/>
    </location>
</feature>
<feature type="disulfide bond" evidence="1">
    <location>
        <begin position="108"/>
        <end position="213"/>
    </location>
</feature>
<feature type="disulfide bond" evidence="1">
    <location>
        <begin position="113"/>
        <end position="170"/>
    </location>
</feature>
<feature type="disulfide bond" evidence="1">
    <location>
        <begin position="235"/>
        <end position="265"/>
    </location>
</feature>
<feature type="disulfide bond" evidence="1">
    <location>
        <begin position="245"/>
        <end position="257"/>
    </location>
</feature>
<feature type="disulfide bond" evidence="1">
    <location>
        <begin position="313"/>
        <end position="346"/>
    </location>
</feature>
<feature type="disulfide bond" evidence="1">
    <location>
        <begin position="397"/>
        <end position="461"/>
    </location>
</feature>
<feature type="disulfide bond" evidence="1">
    <location>
        <begin position="404"/>
        <end position="434"/>
    </location>
</feature>
<comment type="function">
    <text evidence="1">The surface protein gp120 (SU) attaches the virus to the host lymphoid cell by binding to the primary receptor CD4. This interaction induces a structural rearrangement creating a high affinity binding site for a chemokine coreceptor like CCR5. This peculiar 2 stage receptor-interaction strategy allows gp120 to maintain the highly conserved coreceptor-binding site in a cryptic conformation, protected from neutralizing antibodies. These changes are transmitted to the transmembrane protein gp41 and are thought to activate its fusogenic potential by unmasking its fusion peptide (By similarity).</text>
</comment>
<comment type="function">
    <text evidence="1">Surface protein gp120 (SU) may target the virus to gut-associated lymphoid tissue (GALT) by binding host ITGA4/ITGB7 (alpha-4/beta-7 integrins), a complex that mediates T-cell migration to the GALT. Interaction between gp120 and ITGA4/ITGB7 would allow the virus to enter GALT early in the infection, infecting and killing most of GALT's resting CD4+ T-cells. This T-cell depletion is believed to be the major insult to the host immune system leading to AIDS (By similarity).</text>
</comment>
<comment type="function">
    <text evidence="1">The surface protein gp120 is a ligand for CD209/DC-SIGN and CLEC4M/DC-SIGNR, which are respectively found on dendritic cells (DCs), and on endothelial cells of liver sinusoids and lymph node sinuses. These interactions allow capture of viral particles at mucosal surfaces by these cells and subsequent transmission to permissive cells. DCs are professional antigen presenting cells, critical for host immunity by inducing specific immune responses against a broad variety of pathogens. They act as sentinels in various tissues where they take up antigen, process it, and present it to T-cells following migration to lymphoid organs. SIV subverts the migration properties of dendritic cells to gain access to CD4+ T-cells in lymph nodes. Virus transmission to permissive T-cells occurs either in trans (without DCs infection, through viral capture and transmission), or in cis (following DCs productive infection, through the usual CD4-gp120 interaction), thereby inducing a robust infection. In trans infection, bound virions remain infectious over days and it is proposed that they are not degraded, but protected in non-lysosomal acidic organelles within the DCs close to the cell membrane thus contributing to the viral infectious potential during DCs' migration from the periphery to the lymphoid tissues. On arrival at lymphoid tissues, intact virions recycle back to DCs' cell surface allowing virus transmission to CD4+ T-cells. Virion capture also seems to lead to MHC-II-restricted viral antigen presentation, and probably to the activation of SIV-specific CD4+ cells (By similarity).</text>
</comment>
<comment type="function">
    <text evidence="1">The transmembrane protein gp41 (TM) acts as a class I viral fusion protein. Under the current model, the protein has at least 3 conformational states: pre-fusion native state, pre-hairpin intermediate state, and post-fusion hairpin state. During fusion of viral and target intracellular membranes, the coiled coil regions (heptad repeats) assume a trimer-of-hairpins structure, positioning the fusion peptide in close proximity to the C-terminal region of the ectodomain. The formation of this structure appears to drive apposition and subsequent fusion of viral and target cell membranes. Complete fusion occurs in host cell endosomes. The virus undergoes clathrin-dependent internalization long before endosomal fusion, thus minimizing the surface exposure of conserved viral epitopes during fusion and reducing the efficacy of inhibitors targeting these epitopes. Membranes fusion leads to delivery of the nucleocapsid into the cytoplasm (By similarity).</text>
</comment>
<comment type="function">
    <text evidence="1">The envelope glycoprotein gp160 precursor down-modulates cell surface CD4 antigen by interacting with it in the endoplasmic reticulum and blocking its transport to the cell surface.</text>
</comment>
<comment type="function">
    <text evidence="1">The gp120-gp41 heterodimer allows rapid transcytosis of the virus through CD4 negative cells such as simple epithelial monolayers of the intestinal, rectal and endocervical epithelial barriers. Both gp120 and gp41 specifically recognize glycosphingolipids galactosyl-ceramide (GalCer) or 3' sulfo-galactosyl-ceramide (GalS) present in the lipid rafts structures of epithelial cells. Binding to these alternative receptors allows the rapid transcytosis of the virus through the epithelial cells. This transcytotic vesicle-mediated transport of virions from the apical side to the basolateral side of the epithelial cells does not involve infection of the cells themselves (By similarity).</text>
</comment>
<comment type="subunit">
    <molecule>Surface protein gp120</molecule>
    <text evidence="1">The mature envelope protein (Env) consists of a homotrimer of non-covalently associated gp120-gp41 heterodimers. The resulting complex protrudes from the virus surface as a spike. Interacts with host CD4 and CCR5 (By similarity). Gp120 also interacts with the C-type lectins CD209/DC-SIGN and CLEC4M/DC-SIGNR (collectively referred to as DC-SIGN(R)).</text>
</comment>
<comment type="subunit">
    <molecule>Transmembrane protein gp41</molecule>
    <text evidence="1">The mature envelope protein (Env) consists of a homotrimer of non-covalently associated gp120-gp41 heterodimers. The resulting complex protrudes from the virus surface as a spike.</text>
</comment>
<comment type="subcellular location">
    <molecule>Transmembrane protein gp41</molecule>
    <subcellularLocation>
        <location evidence="1">Virion membrane</location>
        <topology evidence="1">Single-pass type I membrane protein</topology>
    </subcellularLocation>
    <subcellularLocation>
        <location evidence="1">Host cell membrane</location>
        <topology evidence="1">Single-pass type I membrane protein</topology>
    </subcellularLocation>
    <subcellularLocation>
        <location evidence="4">Host endosome membrane</location>
        <topology evidence="4">Single-pass type I membrane protein</topology>
    </subcellularLocation>
    <text evidence="1">It is probably concentrated at the site of budding and incorporated into the virions possibly by contacts between the cytoplasmic tail of Env and the N-terminus of Gag.</text>
</comment>
<comment type="subcellular location">
    <molecule>Surface protein gp120</molecule>
    <subcellularLocation>
        <location evidence="1">Virion membrane</location>
        <topology evidence="1">Peripheral membrane protein</topology>
    </subcellularLocation>
    <subcellularLocation>
        <location evidence="1">Host cell membrane</location>
        <topology evidence="1">Peripheral membrane protein</topology>
    </subcellularLocation>
    <subcellularLocation>
        <location evidence="4">Host endosome membrane</location>
        <topology evidence="4">Peripheral membrane protein</topology>
    </subcellularLocation>
    <text evidence="1">The surface protein is not anchored to the viral envelope, but associates with the extravirion surface through its binding to TM. It is probably concentrated at the site of budding and incorporated into the virions possibly by contacts between the cytoplasmic tail of Env and the N-terminus of Gag (By similarity).</text>
</comment>
<comment type="domain">
    <text evidence="1">Some of the most genetically diverse regions of the viral genome are present in Env. They are called variable regions 1 through 5 (V1 through V5) (By similarity).</text>
</comment>
<comment type="domain">
    <text evidence="1">The 17 amino acids long immunosuppressive region is present in many retroviral envelope proteins. Synthetic peptides derived from this relatively conserved sequence inhibit immune function in vitro and in vivo (By similarity).</text>
</comment>
<comment type="PTM">
    <text evidence="1">Specific enzymatic cleavages in vivo yield mature proteins. Envelope glycoproteins are synthesized as an inactive precursor that is heavily N-glycosylated and processed likely by host cell furin in the Golgi to yield the mature SU and TM proteins. The cleavage site between SU and TM requires the minimal sequence [KR]-X-[KR]-R (By similarity).</text>
</comment>
<comment type="PTM">
    <text evidence="1">Palmitoylation of the transmembrane protein and of Env polyprotein (prior to its proteolytic cleavage) is essential for their association with host cell membrane lipid rafts. Palmitoylation is therefore required for envelope trafficking to classical lipid rafts, but not for viral replication (By similarity).</text>
</comment>
<comment type="miscellaneous">
    <text>This is a macaque isolate.</text>
</comment>
<organismHost>
    <name type="scientific">Cercopithecidae</name>
    <name type="common">Old World monkeys</name>
    <dbReference type="NCBI Taxonomy" id="9527"/>
</organismHost>
<keyword id="KW-0002">3D-structure</keyword>
<keyword id="KW-0053">Apoptosis</keyword>
<keyword id="KW-0165">Cleavage on pair of basic residues</keyword>
<keyword id="KW-0175">Coiled coil</keyword>
<keyword id="KW-1015">Disulfide bond</keyword>
<keyword id="KW-1168">Fusion of virus membrane with host membrane</keyword>
<keyword id="KW-0325">Glycoprotein</keyword>
<keyword id="KW-1032">Host cell membrane</keyword>
<keyword id="KW-1039">Host endosome</keyword>
<keyword id="KW-1043">Host membrane</keyword>
<keyword id="KW-0945">Host-virus interaction</keyword>
<keyword id="KW-0449">Lipoprotein</keyword>
<keyword id="KW-0472">Membrane</keyword>
<keyword id="KW-0564">Palmitate</keyword>
<keyword id="KW-0732">Signal</keyword>
<keyword id="KW-0812">Transmembrane</keyword>
<keyword id="KW-1133">Transmembrane helix</keyword>
<keyword id="KW-1161">Viral attachment to host cell</keyword>
<keyword id="KW-0261">Viral envelope protein</keyword>
<keyword id="KW-1162">Viral penetration into host cytoplasm</keyword>
<keyword id="KW-0946">Virion</keyword>
<keyword id="KW-1160">Virus entry into host cell</keyword>
<proteinExistence type="evidence at protein level"/>
<evidence type="ECO:0000250" key="1"/>
<evidence type="ECO:0000255" key="2"/>
<evidence type="ECO:0000256" key="3">
    <source>
        <dbReference type="SAM" id="MobiDB-lite"/>
    </source>
</evidence>
<evidence type="ECO:0000305" key="4"/>
<name>ENV_SIVMK</name>
<gene>
    <name type="primary">env</name>
</gene>
<accession>P05884</accession>
<accession>Q5TYK1</accession>
<sequence>MGCLGNQLLIAILLLSVYGIYCTQYVTVFYGVPAWRNATIPLFCATKNRDTWGTTQCLPDNGDYSELALNVTESFDAWENTVTEQAIEDVWQLFETSIKPCVKLSPLCITMRCNKSETDRWGLTKSSTTITTAAPTSAPVSEKIDMVNETSSCIAQNNCTGLEQEQMISCKFTMTGLKRDKTKEYNETWYSTDLVCEQGNSTDNESRCYMNHCNTSVIQESCDKHYWDTIRFRYCAPPGYALLRCNDTNYSGFMPKCSKVVVSSCTRMMETQTSTWFGFNGTRAENRTYIYWHGRDNRTIISLNKYYNLTMKCRRPGNKTVLPVTIMSGLVFHSQPLTDRPKQAWCWFGGKWKDAIKEVKQTIVKHPRYTGTNNTDKINLTAPGGGDPEVTFMWTNCRGEFLYCKMNWFLNWVEDRDVTTQRPKERHRRNYVPCHIRQIINTWHKVGKNVYLPPREGDLTCNSTVTSLIANIDWTDGNQTSITMSAEVAELYRLELGDYKLVEITPIGLAPTDVKRYTTGGTSRNKRGVFVLGFLGFLATAGSAMGAASFRLTAQSRTLLAGIVQQQQQLLGVVKRQQELLRLTVWGTKNLQTRVTAIEKYLEDQAQLNAWGCAFRQVCHTTVPWPNASLTPDWNNDTWQEWERKVDFLEENITALLEEAQIQQEKNMYELQKLNSWDVFGNWFDLASWIKYIQYGIYVVVGVILLRIVIYIVQMLAKLRQGYRPVFSSPPSYFQXTHTQQDPALPTREGKEGDGGEGGGNSSWPWQIEYIHFLIRQLIRLLTWLFSNCRTLLSRAYQILQPILQRLSATLRRIREVLRTELTYLQYGWSYFHEAVQAGWRSATETLAGAWGDLWETLRRGGRWILAIPRRIRQGLELTLL</sequence>
<protein>
    <recommendedName>
        <fullName>Envelope glycoprotein gp160</fullName>
    </recommendedName>
    <alternativeName>
        <fullName>Env polyprotein</fullName>
    </alternativeName>
    <component>
        <recommendedName>
            <fullName>Surface protein gp120</fullName>
            <shortName>SU</shortName>
        </recommendedName>
        <alternativeName>
            <fullName>Glycoprotein 120</fullName>
            <shortName>gp120</shortName>
        </alternativeName>
    </component>
    <component>
        <recommendedName>
            <fullName>Transmembrane protein gp41</fullName>
            <shortName>TM</shortName>
        </recommendedName>
        <alternativeName>
            <fullName>Glycoprotein 32</fullName>
            <shortName>gp32</shortName>
        </alternativeName>
    </component>
</protein>
<dbReference type="EMBL" id="Y00295">
    <property type="protein sequence ID" value="CAA68403.1"/>
    <property type="molecule type" value="Genomic_DNA"/>
</dbReference>
<dbReference type="PDB" id="2BF1">
    <property type="method" value="X-ray"/>
    <property type="resolution" value="4.00 A"/>
    <property type="chains" value="A=66-505"/>
</dbReference>
<dbReference type="PDBsum" id="2BF1"/>
<dbReference type="DrugBank" id="DB04473">
    <property type="generic name" value="alpha-L-fucose"/>
</dbReference>
<dbReference type="DrugBank" id="DB03740">
    <property type="generic name" value="N-acetyl-alpha-D-glucosamine"/>
</dbReference>
<dbReference type="GlyCosmos" id="P05884">
    <property type="glycosylation" value="23 sites, No reported glycans"/>
</dbReference>
<dbReference type="GO" id="GO:0044175">
    <property type="term" value="C:host cell endosome membrane"/>
    <property type="evidence" value="ECO:0007669"/>
    <property type="project" value="UniProtKB-SubCell"/>
</dbReference>
<dbReference type="GO" id="GO:0020002">
    <property type="term" value="C:host cell plasma membrane"/>
    <property type="evidence" value="ECO:0007669"/>
    <property type="project" value="UniProtKB-SubCell"/>
</dbReference>
<dbReference type="GO" id="GO:0016020">
    <property type="term" value="C:membrane"/>
    <property type="evidence" value="ECO:0007669"/>
    <property type="project" value="UniProtKB-KW"/>
</dbReference>
<dbReference type="GO" id="GO:0019031">
    <property type="term" value="C:viral envelope"/>
    <property type="evidence" value="ECO:0007669"/>
    <property type="project" value="UniProtKB-KW"/>
</dbReference>
<dbReference type="GO" id="GO:0055036">
    <property type="term" value="C:virion membrane"/>
    <property type="evidence" value="ECO:0007669"/>
    <property type="project" value="UniProtKB-SubCell"/>
</dbReference>
<dbReference type="GO" id="GO:0005198">
    <property type="term" value="F:structural molecule activity"/>
    <property type="evidence" value="ECO:0007669"/>
    <property type="project" value="InterPro"/>
</dbReference>
<dbReference type="GO" id="GO:0039663">
    <property type="term" value="P:membrane fusion involved in viral entry into host cell"/>
    <property type="evidence" value="ECO:0007669"/>
    <property type="project" value="UniProtKB-KW"/>
</dbReference>
<dbReference type="GO" id="GO:0046718">
    <property type="term" value="P:symbiont entry into host cell"/>
    <property type="evidence" value="ECO:0007669"/>
    <property type="project" value="UniProtKB-KW"/>
</dbReference>
<dbReference type="GO" id="GO:0019062">
    <property type="term" value="P:virion attachment to host cell"/>
    <property type="evidence" value="ECO:0007669"/>
    <property type="project" value="UniProtKB-KW"/>
</dbReference>
<dbReference type="CDD" id="cd09909">
    <property type="entry name" value="HIV-1-like_HR1-HR2"/>
    <property type="match status" value="1"/>
</dbReference>
<dbReference type="Gene3D" id="1.10.287.210">
    <property type="match status" value="1"/>
</dbReference>
<dbReference type="Gene3D" id="2.170.40.20">
    <property type="entry name" value="Human immunodeficiency virus 1, Gp160, envelope glycoprotein"/>
    <property type="match status" value="2"/>
</dbReference>
<dbReference type="InterPro" id="IPR036377">
    <property type="entry name" value="Gp120_core_sf"/>
</dbReference>
<dbReference type="InterPro" id="IPR000328">
    <property type="entry name" value="GP41-like"/>
</dbReference>
<dbReference type="InterPro" id="IPR000777">
    <property type="entry name" value="HIV1_Gp120"/>
</dbReference>
<dbReference type="Pfam" id="PF00516">
    <property type="entry name" value="GP120"/>
    <property type="match status" value="1"/>
</dbReference>
<dbReference type="Pfam" id="PF00517">
    <property type="entry name" value="GP41"/>
    <property type="match status" value="1"/>
</dbReference>
<dbReference type="SUPFAM" id="SSF56502">
    <property type="entry name" value="gp120 core"/>
    <property type="match status" value="1"/>
</dbReference>
<dbReference type="SUPFAM" id="SSF58069">
    <property type="entry name" value="Virus ectodomain"/>
    <property type="match status" value="1"/>
</dbReference>